<feature type="chain" id="PRO_0000329060" description="Helicase POLQ-like">
    <location>
        <begin position="1"/>
        <end position="1101"/>
    </location>
</feature>
<feature type="domain" description="Helicase ATP-binding" evidence="1">
    <location>
        <begin position="346"/>
        <end position="518"/>
    </location>
</feature>
<feature type="domain" description="Helicase C-terminal" evidence="2">
    <location>
        <begin position="566"/>
        <end position="758"/>
    </location>
</feature>
<feature type="region of interest" description="Disordered" evidence="3">
    <location>
        <begin position="212"/>
        <end position="261"/>
    </location>
</feature>
<feature type="short sequence motif" description="DEAH box" evidence="1">
    <location>
        <begin position="463"/>
        <end position="466"/>
    </location>
</feature>
<feature type="compositionally biased region" description="Basic and acidic residues" evidence="3">
    <location>
        <begin position="213"/>
        <end position="225"/>
    </location>
</feature>
<feature type="compositionally biased region" description="Polar residues" evidence="3">
    <location>
        <begin position="241"/>
        <end position="258"/>
    </location>
</feature>
<feature type="binding site" evidence="1">
    <location>
        <begin position="359"/>
        <end position="366"/>
    </location>
    <ligand>
        <name>ATP</name>
        <dbReference type="ChEBI" id="CHEBI:30616"/>
    </ligand>
</feature>
<feature type="splice variant" id="VSP_032941" description="In isoform 3." evidence="15">
    <location>
        <begin position="1"/>
        <end position="106"/>
    </location>
</feature>
<feature type="splice variant" id="VSP_032942" description="In isoform 2." evidence="16">
    <location>
        <begin position="63"/>
        <end position="99"/>
    </location>
</feature>
<feature type="splice variant" id="VSP_032943" description="In isoform 4." evidence="16">
    <original>PNDSEVDMFGDYDSFTENSFIAQVDDLEQKYMQLPEH</original>
    <variation>VRRTWNLKLQTFGILPRCKELTSFIAFVYFSRLRYRC</variation>
    <location>
        <begin position="100"/>
        <end position="136"/>
    </location>
</feature>
<feature type="splice variant" id="VSP_032944" description="In isoform 4." evidence="16">
    <location>
        <begin position="137"/>
        <end position="1101"/>
    </location>
</feature>
<feature type="splice variant" id="VSP_032947" description="In isoform 2 and isoform 3." evidence="15 16">
    <original>EWQHTCLTLNSVQERK</original>
    <variation>GNAFCWNKKIFFLSLP</variation>
    <location>
        <begin position="338"/>
        <end position="353"/>
    </location>
</feature>
<feature type="splice variant" id="VSP_032948" description="In isoform 2 and isoform 3." evidence="15 16">
    <location>
        <begin position="354"/>
        <end position="1101"/>
    </location>
</feature>
<feature type="sequence variant" id="VAR_061213" description="In dbSNP:rs6831595." evidence="4 5">
    <original>V</original>
    <variation>E</variation>
    <location>
        <position position="35"/>
    </location>
</feature>
<feature type="sequence variant" id="VAR_055892" description="In dbSNP:rs17006837.">
    <original>L</original>
    <variation>P</variation>
    <location>
        <position position="235"/>
    </location>
</feature>
<feature type="sequence variant" id="VAR_042643" description="In a breast cancer sample; somatic mutation." evidence="6">
    <original>D</original>
    <variation>N</variation>
    <location>
        <position position="565"/>
    </location>
</feature>
<feature type="sequence variant" id="VAR_055893" description="In dbSNP:rs6817280.">
    <original>P</original>
    <variation>S</variation>
    <location>
        <position position="585"/>
    </location>
</feature>
<feature type="sequence variant" id="VAR_055894" description="In dbSNP:rs17006794.">
    <original>V</original>
    <variation>M</variation>
    <location>
        <position position="1094"/>
    </location>
</feature>
<feature type="mutagenesis site" description="Abolishes ATPase and DNA helicase activity." evidence="4 13">
    <original>K</original>
    <variation>M</variation>
    <location>
        <position position="365"/>
    </location>
</feature>
<feature type="mutagenesis site" description="Abolished ATPase and DNA helicase activity." evidence="12">
    <original>D</original>
    <variation>A</variation>
    <location>
        <position position="463"/>
    </location>
</feature>
<feature type="mutagenesis site" description="Abolished double-stranded DNA-binding." evidence="11">
    <original>YK</original>
    <variation>SD</variation>
    <location>
        <begin position="818"/>
        <end position="819"/>
    </location>
</feature>
<feature type="sequence conflict" description="In Ref. 1; AAL85274, 2; BAC87559 and 4; AAH95473." evidence="18" ref="1 2 4">
    <original>V</original>
    <variation>I</variation>
    <location>
        <position position="306"/>
    </location>
</feature>
<keyword id="KW-0025">Alternative splicing</keyword>
<keyword id="KW-0067">ATP-binding</keyword>
<keyword id="KW-0158">Chromosome</keyword>
<keyword id="KW-0227">DNA damage</keyword>
<keyword id="KW-0234">DNA repair</keyword>
<keyword id="KW-0238">DNA-binding</keyword>
<keyword id="KW-0347">Helicase</keyword>
<keyword id="KW-0378">Hydrolase</keyword>
<keyword id="KW-0413">Isomerase</keyword>
<keyword id="KW-0547">Nucleotide-binding</keyword>
<keyword id="KW-0539">Nucleus</keyword>
<keyword id="KW-1267">Proteomics identification</keyword>
<keyword id="KW-1185">Reference proteome</keyword>
<organism>
    <name type="scientific">Homo sapiens</name>
    <name type="common">Human</name>
    <dbReference type="NCBI Taxonomy" id="9606"/>
    <lineage>
        <taxon>Eukaryota</taxon>
        <taxon>Metazoa</taxon>
        <taxon>Chordata</taxon>
        <taxon>Craniata</taxon>
        <taxon>Vertebrata</taxon>
        <taxon>Euteleostomi</taxon>
        <taxon>Mammalia</taxon>
        <taxon>Eutheria</taxon>
        <taxon>Euarchontoglires</taxon>
        <taxon>Primates</taxon>
        <taxon>Haplorrhini</taxon>
        <taxon>Catarrhini</taxon>
        <taxon>Hominidae</taxon>
        <taxon>Homo</taxon>
    </lineage>
</organism>
<dbReference type="EC" id="5.6.2.4" evidence="4 12 13"/>
<dbReference type="EMBL" id="AF436845">
    <property type="protein sequence ID" value="AAL85274.1"/>
    <property type="molecule type" value="mRNA"/>
</dbReference>
<dbReference type="EMBL" id="AK128665">
    <property type="protein sequence ID" value="BAC87559.1"/>
    <property type="molecule type" value="mRNA"/>
</dbReference>
<dbReference type="EMBL" id="AC096768">
    <property type="status" value="NOT_ANNOTATED_CDS"/>
    <property type="molecule type" value="Genomic_DNA"/>
</dbReference>
<dbReference type="EMBL" id="BC015428">
    <property type="protein sequence ID" value="AAH15428.1"/>
    <property type="molecule type" value="mRNA"/>
</dbReference>
<dbReference type="EMBL" id="BC095473">
    <property type="protein sequence ID" value="AAH95473.1"/>
    <property type="molecule type" value="mRNA"/>
</dbReference>
<dbReference type="EMBL" id="AL512702">
    <property type="protein sequence ID" value="CAH56359.1"/>
    <property type="molecule type" value="mRNA"/>
</dbReference>
<dbReference type="CCDS" id="CCDS3603.1">
    <molecule id="Q8TDG4-1"/>
</dbReference>
<dbReference type="RefSeq" id="NP_001284687.2">
    <molecule id="Q8TDG4-2"/>
    <property type="nucleotide sequence ID" value="NM_001297758.2"/>
</dbReference>
<dbReference type="RefSeq" id="NP_001284688.1">
    <property type="nucleotide sequence ID" value="NM_001297759.1"/>
</dbReference>
<dbReference type="RefSeq" id="NP_598375.3">
    <molecule id="Q8TDG4-1"/>
    <property type="nucleotide sequence ID" value="NM_133636.5"/>
</dbReference>
<dbReference type="SMR" id="Q8TDG4"/>
<dbReference type="BioGRID" id="125250">
    <property type="interactions" value="17"/>
</dbReference>
<dbReference type="DIP" id="DIP-60603N"/>
<dbReference type="FunCoup" id="Q8TDG4">
    <property type="interactions" value="2123"/>
</dbReference>
<dbReference type="IntAct" id="Q8TDG4">
    <property type="interactions" value="12"/>
</dbReference>
<dbReference type="MINT" id="Q8TDG4"/>
<dbReference type="STRING" id="9606.ENSP00000295488"/>
<dbReference type="GlyConnect" id="2045">
    <property type="glycosylation" value="3 N-Linked glycans (1 site)"/>
</dbReference>
<dbReference type="GlyCosmos" id="Q8TDG4">
    <property type="glycosylation" value="1 site, 6 glycans"/>
</dbReference>
<dbReference type="GlyGen" id="Q8TDG4">
    <property type="glycosylation" value="2 sites, 6 N-linked glycans (1 site), 1 O-linked glycan (1 site)"/>
</dbReference>
<dbReference type="iPTMnet" id="Q8TDG4"/>
<dbReference type="PhosphoSitePlus" id="Q8TDG4"/>
<dbReference type="BioMuta" id="HELQ"/>
<dbReference type="DMDM" id="296434521"/>
<dbReference type="jPOST" id="Q8TDG4"/>
<dbReference type="MassIVE" id="Q8TDG4"/>
<dbReference type="PaxDb" id="9606-ENSP00000295488"/>
<dbReference type="PeptideAtlas" id="Q8TDG4"/>
<dbReference type="ProteomicsDB" id="74283">
    <molecule id="Q8TDG4-1"/>
</dbReference>
<dbReference type="ProteomicsDB" id="74284">
    <molecule id="Q8TDG4-2"/>
</dbReference>
<dbReference type="ProteomicsDB" id="74285">
    <molecule id="Q8TDG4-4"/>
</dbReference>
<dbReference type="ProteomicsDB" id="74286">
    <molecule id="Q8TDG4-5"/>
</dbReference>
<dbReference type="Antibodypedia" id="25213">
    <property type="antibodies" value="57 antibodies from 17 providers"/>
</dbReference>
<dbReference type="DNASU" id="113510"/>
<dbReference type="Ensembl" id="ENST00000295488.8">
    <molecule id="Q8TDG4-1"/>
    <property type="protein sequence ID" value="ENSP00000295488.3"/>
    <property type="gene ID" value="ENSG00000163312.11"/>
</dbReference>
<dbReference type="GeneID" id="113510"/>
<dbReference type="KEGG" id="hsa:113510"/>
<dbReference type="MANE-Select" id="ENST00000295488.8">
    <property type="protein sequence ID" value="ENSP00000295488.3"/>
    <property type="RefSeq nucleotide sequence ID" value="NM_133636.5"/>
    <property type="RefSeq protein sequence ID" value="NP_598375.3"/>
</dbReference>
<dbReference type="UCSC" id="uc003hom.4">
    <molecule id="Q8TDG4-1"/>
    <property type="organism name" value="human"/>
</dbReference>
<dbReference type="AGR" id="HGNC:18536"/>
<dbReference type="CTD" id="113510"/>
<dbReference type="DisGeNET" id="113510"/>
<dbReference type="GeneCards" id="HELQ"/>
<dbReference type="HGNC" id="HGNC:18536">
    <property type="gene designation" value="HELQ"/>
</dbReference>
<dbReference type="HPA" id="ENSG00000163312">
    <property type="expression patterns" value="Low tissue specificity"/>
</dbReference>
<dbReference type="MIM" id="606769">
    <property type="type" value="gene"/>
</dbReference>
<dbReference type="neXtProt" id="NX_Q8TDG4"/>
<dbReference type="OpenTargets" id="ENSG00000163312"/>
<dbReference type="PharmGKB" id="PA164720529"/>
<dbReference type="VEuPathDB" id="HostDB:ENSG00000163312"/>
<dbReference type="eggNOG" id="KOG0950">
    <property type="taxonomic scope" value="Eukaryota"/>
</dbReference>
<dbReference type="GeneTree" id="ENSGT00940000157350"/>
<dbReference type="HOGENOM" id="CLU_006553_1_0_1"/>
<dbReference type="InParanoid" id="Q8TDG4"/>
<dbReference type="OMA" id="MFLNANI"/>
<dbReference type="OrthoDB" id="2320933at2759"/>
<dbReference type="PAN-GO" id="Q8TDG4">
    <property type="GO annotations" value="2 GO annotations based on evolutionary models"/>
</dbReference>
<dbReference type="PhylomeDB" id="Q8TDG4"/>
<dbReference type="TreeFam" id="TF105018"/>
<dbReference type="BRENDA" id="3.6.4.12">
    <property type="organism ID" value="2681"/>
</dbReference>
<dbReference type="PathwayCommons" id="Q8TDG4"/>
<dbReference type="SignaLink" id="Q8TDG4"/>
<dbReference type="BioGRID-ORCS" id="113510">
    <property type="hits" value="21 hits in 1160 CRISPR screens"/>
</dbReference>
<dbReference type="ChiTaRS" id="HELQ">
    <property type="organism name" value="human"/>
</dbReference>
<dbReference type="GenomeRNAi" id="113510"/>
<dbReference type="Pharos" id="Q8TDG4">
    <property type="development level" value="Tbio"/>
</dbReference>
<dbReference type="PRO" id="PR:Q8TDG4"/>
<dbReference type="Proteomes" id="UP000005640">
    <property type="component" value="Chromosome 4"/>
</dbReference>
<dbReference type="RNAct" id="Q8TDG4">
    <property type="molecule type" value="protein"/>
</dbReference>
<dbReference type="Bgee" id="ENSG00000163312">
    <property type="expression patterns" value="Expressed in calcaneal tendon and 173 other cell types or tissues"/>
</dbReference>
<dbReference type="ExpressionAtlas" id="Q8TDG4">
    <property type="expression patterns" value="baseline and differential"/>
</dbReference>
<dbReference type="GO" id="GO:0005634">
    <property type="term" value="C:nucleus"/>
    <property type="evidence" value="ECO:0000314"/>
    <property type="project" value="UniProtKB"/>
</dbReference>
<dbReference type="GO" id="GO:0090734">
    <property type="term" value="C:site of DNA damage"/>
    <property type="evidence" value="ECO:0000314"/>
    <property type="project" value="UniProtKB"/>
</dbReference>
<dbReference type="GO" id="GO:0005524">
    <property type="term" value="F:ATP binding"/>
    <property type="evidence" value="ECO:0007669"/>
    <property type="project" value="UniProtKB-KW"/>
</dbReference>
<dbReference type="GO" id="GO:0016887">
    <property type="term" value="F:ATP hydrolysis activity"/>
    <property type="evidence" value="ECO:0007669"/>
    <property type="project" value="RHEA"/>
</dbReference>
<dbReference type="GO" id="GO:0003677">
    <property type="term" value="F:DNA binding"/>
    <property type="evidence" value="ECO:0007669"/>
    <property type="project" value="UniProtKB-KW"/>
</dbReference>
<dbReference type="GO" id="GO:1990518">
    <property type="term" value="F:single-stranded 3'-5' DNA helicase activity"/>
    <property type="evidence" value="ECO:0000314"/>
    <property type="project" value="UniProtKB"/>
</dbReference>
<dbReference type="GO" id="GO:0010792">
    <property type="term" value="P:DNA double-strand break processing involved in repair via single-strand annealing"/>
    <property type="evidence" value="ECO:0000314"/>
    <property type="project" value="UniProtKB"/>
</dbReference>
<dbReference type="GO" id="GO:0097681">
    <property type="term" value="P:double-strand break repair via alternative nonhomologous end joining"/>
    <property type="evidence" value="ECO:0000314"/>
    <property type="project" value="UniProtKB"/>
</dbReference>
<dbReference type="GO" id="GO:0000724">
    <property type="term" value="P:double-strand break repair via homologous recombination"/>
    <property type="evidence" value="ECO:0000315"/>
    <property type="project" value="UniProtKB"/>
</dbReference>
<dbReference type="GO" id="GO:0045003">
    <property type="term" value="P:double-strand break repair via synthesis-dependent strand annealing"/>
    <property type="evidence" value="ECO:0000314"/>
    <property type="project" value="UniProtKB"/>
</dbReference>
<dbReference type="GO" id="GO:1905168">
    <property type="term" value="P:positive regulation of double-strand break repair via homologous recombination"/>
    <property type="evidence" value="ECO:0000250"/>
    <property type="project" value="UniProtKB"/>
</dbReference>
<dbReference type="CDD" id="cd18026">
    <property type="entry name" value="DEXHc_POLQ-like"/>
    <property type="match status" value="1"/>
</dbReference>
<dbReference type="CDD" id="cd18795">
    <property type="entry name" value="SF2_C_Ski2"/>
    <property type="match status" value="1"/>
</dbReference>
<dbReference type="FunFam" id="1.10.3380.20:FF:000002">
    <property type="entry name" value="helicase POLQ-like isoform X1"/>
    <property type="match status" value="1"/>
</dbReference>
<dbReference type="FunFam" id="3.40.50.300:FF:000813">
    <property type="entry name" value="helicase POLQ-like isoform X1"/>
    <property type="match status" value="1"/>
</dbReference>
<dbReference type="FunFam" id="3.40.50.300:FF:001293">
    <property type="entry name" value="helicase POLQ-like isoform X5"/>
    <property type="match status" value="1"/>
</dbReference>
<dbReference type="FunFam" id="1.10.150.20:FF:000058">
    <property type="entry name" value="Helicase, POLQ like"/>
    <property type="match status" value="1"/>
</dbReference>
<dbReference type="Gene3D" id="1.10.3380.20">
    <property type="match status" value="1"/>
</dbReference>
<dbReference type="Gene3D" id="1.10.150.20">
    <property type="entry name" value="5' to 3' exonuclease, C-terminal subdomain"/>
    <property type="match status" value="1"/>
</dbReference>
<dbReference type="Gene3D" id="3.40.50.300">
    <property type="entry name" value="P-loop containing nucleotide triphosphate hydrolases"/>
    <property type="match status" value="2"/>
</dbReference>
<dbReference type="InterPro" id="IPR011545">
    <property type="entry name" value="DEAD/DEAH_box_helicase_dom"/>
</dbReference>
<dbReference type="InterPro" id="IPR050474">
    <property type="entry name" value="Hel308_SKI2-like"/>
</dbReference>
<dbReference type="InterPro" id="IPR014001">
    <property type="entry name" value="Helicase_ATP-bd"/>
</dbReference>
<dbReference type="InterPro" id="IPR001650">
    <property type="entry name" value="Helicase_C-like"/>
</dbReference>
<dbReference type="InterPro" id="IPR046931">
    <property type="entry name" value="HTH_61"/>
</dbReference>
<dbReference type="InterPro" id="IPR027417">
    <property type="entry name" value="P-loop_NTPase"/>
</dbReference>
<dbReference type="InterPro" id="IPR048960">
    <property type="entry name" value="POLQ-like_helical"/>
</dbReference>
<dbReference type="InterPro" id="IPR036390">
    <property type="entry name" value="WH_DNA-bd_sf"/>
</dbReference>
<dbReference type="PANTHER" id="PTHR47961">
    <property type="entry name" value="DNA POLYMERASE THETA, PUTATIVE (AFU_ORTHOLOGUE AFUA_1G05260)-RELATED"/>
    <property type="match status" value="1"/>
</dbReference>
<dbReference type="PANTHER" id="PTHR47961:SF12">
    <property type="entry name" value="HELICASE POLQ-LIKE"/>
    <property type="match status" value="1"/>
</dbReference>
<dbReference type="Pfam" id="PF00270">
    <property type="entry name" value="DEAD"/>
    <property type="match status" value="1"/>
</dbReference>
<dbReference type="Pfam" id="PF00271">
    <property type="entry name" value="Helicase_C"/>
    <property type="match status" value="1"/>
</dbReference>
<dbReference type="Pfam" id="PF20470">
    <property type="entry name" value="HTH_61"/>
    <property type="match status" value="1"/>
</dbReference>
<dbReference type="Pfam" id="PF21099">
    <property type="entry name" value="POLQ_helical"/>
    <property type="match status" value="1"/>
</dbReference>
<dbReference type="SMART" id="SM00487">
    <property type="entry name" value="DEXDc"/>
    <property type="match status" value="1"/>
</dbReference>
<dbReference type="SMART" id="SM00490">
    <property type="entry name" value="HELICc"/>
    <property type="match status" value="1"/>
</dbReference>
<dbReference type="SUPFAM" id="SSF52540">
    <property type="entry name" value="P-loop containing nucleoside triphosphate hydrolases"/>
    <property type="match status" value="1"/>
</dbReference>
<dbReference type="SUPFAM" id="SSF158702">
    <property type="entry name" value="Sec63 N-terminal domain-like"/>
    <property type="match status" value="1"/>
</dbReference>
<dbReference type="SUPFAM" id="SSF46785">
    <property type="entry name" value="Winged helix' DNA-binding domain"/>
    <property type="match status" value="1"/>
</dbReference>
<dbReference type="PROSITE" id="PS51192">
    <property type="entry name" value="HELICASE_ATP_BIND_1"/>
    <property type="match status" value="1"/>
</dbReference>
<dbReference type="PROSITE" id="PS51194">
    <property type="entry name" value="HELICASE_CTER"/>
    <property type="match status" value="1"/>
</dbReference>
<comment type="function">
    <text evidence="4 7 8 9 10 12 13">Single-stranded 3'-5' DNA helicase that plays a key role in homology-driven double-strand break (DSB) repair (PubMed:11751861, PubMed:19995904, PubMed:21398521, PubMed:24005041, PubMed:24005565, PubMed:34316696, PubMed:34937945). Involved in different DSB repair mechanisms that are guided by annealing of extensive stretches of complementary bases at break ends, such as microhomology-mediated end-joining (MMEJ), single-strand annealing (SSA) or synthesis-dependent strand annealing (SDSA) (PubMed:34937945). Possesses both DNA unwinding and annealing activities (PubMed:34937945). Forms a complex with RAD51, stimulating HELQ DNA helicase activity and ability to unwing DNA (PubMed:34937945). Efficiently unwinds substrates containing 3' overhangs or a D-loop (PubMed:21398521, PubMed:34937945). In contrast, interaction with the replication protein A (RPA/RP-A) complex inhibits DNA unwinding by HELQ but strongly stimulates DNA strand annealing (PubMed:34937945). Triggers displacement of RPA from single-stranded DNA to facilitate annealing of complementary sequences (PubMed:34316696, PubMed:34937945).</text>
</comment>
<comment type="catalytic activity">
    <reaction evidence="4 12 13">
        <text>Couples ATP hydrolysis with the unwinding of duplex DNA by translocating in the 3'-5' direction.</text>
        <dbReference type="EC" id="5.6.2.4"/>
    </reaction>
</comment>
<comment type="catalytic activity">
    <reaction evidence="4 12 13">
        <text>ATP + H2O = ADP + phosphate + H(+)</text>
        <dbReference type="Rhea" id="RHEA:13065"/>
        <dbReference type="ChEBI" id="CHEBI:15377"/>
        <dbReference type="ChEBI" id="CHEBI:15378"/>
        <dbReference type="ChEBI" id="CHEBI:30616"/>
        <dbReference type="ChEBI" id="CHEBI:43474"/>
        <dbReference type="ChEBI" id="CHEBI:456216"/>
        <dbReference type="EC" id="5.6.2.4"/>
    </reaction>
</comment>
<comment type="activity regulation">
    <text evidence="4">ATPase activity is strongly stimulated by single-stranded DNA (PubMed:11751861). Presence of ATP and Mg cofactor are required for helicase activity allowing to unwind duplex oligonucleotides up to 60-70-mer (PubMed:11751861). This helicase activity is stimulated by replication protein A (RPA/RP-A) complex that binds to unwound regions and inhibits re-annealing (PubMed:11751861).</text>
</comment>
<comment type="subunit">
    <text evidence="7 9 12 13">Homodimer (PubMed:34316696). Interacts with POLN (PubMed:19995904). Interacts with RAD51B and RAD51C; promoting association with the BCDX2 complex (PubMed:24005041). Interacts with the replication protein A (RPA/RP-A) complex (PubMed:34316696, PubMed:34937945). Interacts with RAD51; stimulating HELQ DNA helicase activity and ability to unwing DNA (PubMed:34937945).</text>
</comment>
<comment type="interaction">
    <interactant intactId="EBI-2802156">
        <id>Q8TDG4</id>
    </interactant>
    <interactant intactId="EBI-2267048">
        <id>O43502</id>
        <label>RAD51C</label>
    </interactant>
    <organismsDiffer>false</organismsDiffer>
    <experiments>6</experiments>
</comment>
<comment type="subcellular location">
    <subcellularLocation>
        <location evidence="8">Nucleus</location>
    </subcellularLocation>
    <subcellularLocation>
        <location evidence="8 13">Chromosome</location>
    </subcellularLocation>
    <text evidence="8 13">Localizes to sites of DNA damage; localizes to damaged replication forks.</text>
</comment>
<comment type="alternative products">
    <event type="alternative splicing"/>
    <isoform>
        <id>Q8TDG4-1</id>
        <name>1</name>
        <sequence type="displayed"/>
    </isoform>
    <isoform>
        <id>Q8TDG4-2</id>
        <name>2</name>
        <sequence type="described" ref="VSP_032942 VSP_032947 VSP_032948"/>
    </isoform>
    <isoform>
        <id>Q8TDG4-4</id>
        <name>3</name>
        <sequence type="described" ref="VSP_032941 VSP_032947 VSP_032948"/>
    </isoform>
    <isoform>
        <id>Q8TDG4-5</id>
        <name>4</name>
        <sequence type="described" ref="VSP_032943 VSP_032944"/>
    </isoform>
</comment>
<comment type="similarity">
    <text evidence="18">Belongs to the helicase family. SKI2 subfamily.</text>
</comment>
<evidence type="ECO:0000255" key="1">
    <source>
        <dbReference type="PROSITE-ProRule" id="PRU00541"/>
    </source>
</evidence>
<evidence type="ECO:0000255" key="2">
    <source>
        <dbReference type="PROSITE-ProRule" id="PRU00542"/>
    </source>
</evidence>
<evidence type="ECO:0000256" key="3">
    <source>
        <dbReference type="SAM" id="MobiDB-lite"/>
    </source>
</evidence>
<evidence type="ECO:0000269" key="4">
    <source>
    </source>
</evidence>
<evidence type="ECO:0000269" key="5">
    <source>
    </source>
</evidence>
<evidence type="ECO:0000269" key="6">
    <source>
    </source>
</evidence>
<evidence type="ECO:0000269" key="7">
    <source>
    </source>
</evidence>
<evidence type="ECO:0000269" key="8">
    <source>
    </source>
</evidence>
<evidence type="ECO:0000269" key="9">
    <source>
    </source>
</evidence>
<evidence type="ECO:0000269" key="10">
    <source>
    </source>
</evidence>
<evidence type="ECO:0000269" key="11">
    <source>
    </source>
</evidence>
<evidence type="ECO:0000269" key="12">
    <source>
    </source>
</evidence>
<evidence type="ECO:0000269" key="13">
    <source>
    </source>
</evidence>
<evidence type="ECO:0000303" key="14">
    <source>
    </source>
</evidence>
<evidence type="ECO:0000303" key="15">
    <source>
    </source>
</evidence>
<evidence type="ECO:0000303" key="16">
    <source>
    </source>
</evidence>
<evidence type="ECO:0000303" key="17">
    <source>
    </source>
</evidence>
<evidence type="ECO:0000305" key="18"/>
<evidence type="ECO:0000305" key="19">
    <source>
    </source>
</evidence>
<evidence type="ECO:0000312" key="20">
    <source>
        <dbReference type="HGNC" id="HGNC:18536"/>
    </source>
</evidence>
<accession>Q8TDG4</accession>
<accession>Q05DF9</accession>
<accession>Q502W9</accession>
<accession>Q659B8</accession>
<accession>Q6ZQX4</accession>
<accession>Q6ZTS4</accession>
<accession>Q96EX7</accession>
<proteinExistence type="evidence at protein level"/>
<gene>
    <name evidence="17 20" type="primary">HELQ</name>
    <name evidence="14" type="synonym">HEL308</name>
</gene>
<name>HELQ_HUMAN</name>
<protein>
    <recommendedName>
        <fullName evidence="19">Helicase POLQ-like</fullName>
        <ecNumber evidence="4 12 13">5.6.2.4</ecNumber>
    </recommendedName>
    <alternativeName>
        <fullName evidence="14">Mus308-like helicase</fullName>
    </alternativeName>
    <alternativeName>
        <fullName evidence="14">POLQ-like helicase</fullName>
    </alternativeName>
</protein>
<sequence length="1101" mass="124131">MDECGSRIRRRVSLPKRNRPSLGCIFGAPTAAELVPGDEGKEEEEMVAENRRRKTAGVLPVEVQPLLLSDSPECLVLGGGDTNPDLLRHMPTDRGVGDQPNDSEVDMFGDYDSFTENSFIAQVDDLEQKYMQLPEHKKHATDFATENLCSESIKNKLSITTIGNLTELQTDKHTENQSGYEGVTIEPGADLLYDVPSSQAIYFENLQNSSNDLGDHSMKERDWKSSSHNTVNEELPHNCIEQPQQNDESSSKVRTSSDMNRRKSIKDHLKNAMTGNAKAQTPIFSRSKQLKDTLLSEEINVAKKTVESSSNDLGPFYSLPSKVRDLYAQFKGIEKLYEWQHTCLTLNSVQERKNLIYSLPTSGGKTLVAEILMLQELLCCRKDVLMILPYVAIVQEKISGLSSFGIELGFFVEEYAGSKGRFPPTKRREKKSLYIATIEKGHSLVNSLIETGRIDSLGLVVVDELHMIGEGSRGATLEMTLAKILYTSKTTQIIGMSATLNNVEDLQKFLQAEYYTSQFRPVELKEYLKINDTIYEVDSKAENGMTFSRLLNYKYSDTLKKMDPDHLVALVTEVIPNYSCLVFCPSKKNCENVAEMICKFLSKEYLKHKEKEKCEVIKNLKNIGNGNLCPVLKRTIPFGVAYHHSGLTSDERKLLEEAYSTGVLCLFTCTSTLAAGVNLPARRVILRAPYVAKEFLKRNQYKQMIGRAGRAGIDTIGESILILQEKDKQQVLELITKPLENCYSHLVQEFTKGIQTLFLSLIGLKIATNLDDIYHFMNGTFFGVQQKVLLKEKSLWEITVESLRYLTEKGLLQKDTIYKSEEEVQYNFHITKLGRASFKGTIDLAYCDILYRDLKKGLEGLVLESLLHLIYLTTPYDLVSQCNPDWMIYFRQFSQLSPAEQNVAAILGVSESFIGKKASGQAIGKKVDKNVVNRLYLSFVLYTLLKETNIWTVSEKFNMPRGYIQNLLTGTASFSSCVLHFCEELEEFWVYRALLVELTKKLTYCVKAELIPLMEVTGVLEGRAKQLYSAGYKSLMHLANANPEVLVRTIDHLSRRQAKQIVSSAKMLLHEKAEALQEEVEELLRLPSDFPGAVASSTDKA</sequence>
<reference key="1">
    <citation type="journal article" date="2002" name="J. Biol. Chem.">
        <title>A human DNA helicase homologous to the DNA cross-link sensitivity protein Mus308.</title>
        <authorList>
            <person name="Marini F."/>
            <person name="Wood R.D."/>
        </authorList>
    </citation>
    <scope>NUCLEOTIDE SEQUENCE [MRNA] (ISOFORM 1)</scope>
    <scope>FUNCTION</scope>
    <scope>CATALYTIC ACTIVITY</scope>
    <scope>ACTIVITY REGULATION</scope>
    <scope>MUTAGENESIS OF LYS-365</scope>
    <scope>VARIANT GLU-35</scope>
</reference>
<reference key="2">
    <citation type="journal article" date="2004" name="Nat. Genet.">
        <title>Complete sequencing and characterization of 21,243 full-length human cDNAs.</title>
        <authorList>
            <person name="Ota T."/>
            <person name="Suzuki Y."/>
            <person name="Nishikawa T."/>
            <person name="Otsuki T."/>
            <person name="Sugiyama T."/>
            <person name="Irie R."/>
            <person name="Wakamatsu A."/>
            <person name="Hayashi K."/>
            <person name="Sato H."/>
            <person name="Nagai K."/>
            <person name="Kimura K."/>
            <person name="Makita H."/>
            <person name="Sekine M."/>
            <person name="Obayashi M."/>
            <person name="Nishi T."/>
            <person name="Shibahara T."/>
            <person name="Tanaka T."/>
            <person name="Ishii S."/>
            <person name="Yamamoto J."/>
            <person name="Saito K."/>
            <person name="Kawai Y."/>
            <person name="Isono Y."/>
            <person name="Nakamura Y."/>
            <person name="Nagahari K."/>
            <person name="Murakami K."/>
            <person name="Yasuda T."/>
            <person name="Iwayanagi T."/>
            <person name="Wagatsuma M."/>
            <person name="Shiratori A."/>
            <person name="Sudo H."/>
            <person name="Hosoiri T."/>
            <person name="Kaku Y."/>
            <person name="Kodaira H."/>
            <person name="Kondo H."/>
            <person name="Sugawara M."/>
            <person name="Takahashi M."/>
            <person name="Kanda K."/>
            <person name="Yokoi T."/>
            <person name="Furuya T."/>
            <person name="Kikkawa E."/>
            <person name="Omura Y."/>
            <person name="Abe K."/>
            <person name="Kamihara K."/>
            <person name="Katsuta N."/>
            <person name="Sato K."/>
            <person name="Tanikawa M."/>
            <person name="Yamazaki M."/>
            <person name="Ninomiya K."/>
            <person name="Ishibashi T."/>
            <person name="Yamashita H."/>
            <person name="Murakawa K."/>
            <person name="Fujimori K."/>
            <person name="Tanai H."/>
            <person name="Kimata M."/>
            <person name="Watanabe M."/>
            <person name="Hiraoka S."/>
            <person name="Chiba Y."/>
            <person name="Ishida S."/>
            <person name="Ono Y."/>
            <person name="Takiguchi S."/>
            <person name="Watanabe S."/>
            <person name="Yosida M."/>
            <person name="Hotuta T."/>
            <person name="Kusano J."/>
            <person name="Kanehori K."/>
            <person name="Takahashi-Fujii A."/>
            <person name="Hara H."/>
            <person name="Tanase T.-O."/>
            <person name="Nomura Y."/>
            <person name="Togiya S."/>
            <person name="Komai F."/>
            <person name="Hara R."/>
            <person name="Takeuchi K."/>
            <person name="Arita M."/>
            <person name="Imose N."/>
            <person name="Musashino K."/>
            <person name="Yuuki H."/>
            <person name="Oshima A."/>
            <person name="Sasaki N."/>
            <person name="Aotsuka S."/>
            <person name="Yoshikawa Y."/>
            <person name="Matsunawa H."/>
            <person name="Ichihara T."/>
            <person name="Shiohata N."/>
            <person name="Sano S."/>
            <person name="Moriya S."/>
            <person name="Momiyama H."/>
            <person name="Satoh N."/>
            <person name="Takami S."/>
            <person name="Terashima Y."/>
            <person name="Suzuki O."/>
            <person name="Nakagawa S."/>
            <person name="Senoh A."/>
            <person name="Mizoguchi H."/>
            <person name="Goto Y."/>
            <person name="Shimizu F."/>
            <person name="Wakebe H."/>
            <person name="Hishigaki H."/>
            <person name="Watanabe T."/>
            <person name="Sugiyama A."/>
            <person name="Takemoto M."/>
            <person name="Kawakami B."/>
            <person name="Yamazaki M."/>
            <person name="Watanabe K."/>
            <person name="Kumagai A."/>
            <person name="Itakura S."/>
            <person name="Fukuzumi Y."/>
            <person name="Fujimori Y."/>
            <person name="Komiyama M."/>
            <person name="Tashiro H."/>
            <person name="Tanigami A."/>
            <person name="Fujiwara T."/>
            <person name="Ono T."/>
            <person name="Yamada K."/>
            <person name="Fujii Y."/>
            <person name="Ozaki K."/>
            <person name="Hirao M."/>
            <person name="Ohmori Y."/>
            <person name="Kawabata A."/>
            <person name="Hikiji T."/>
            <person name="Kobatake N."/>
            <person name="Inagaki H."/>
            <person name="Ikema Y."/>
            <person name="Okamoto S."/>
            <person name="Okitani R."/>
            <person name="Kawakami T."/>
            <person name="Noguchi S."/>
            <person name="Itoh T."/>
            <person name="Shigeta K."/>
            <person name="Senba T."/>
            <person name="Matsumura K."/>
            <person name="Nakajima Y."/>
            <person name="Mizuno T."/>
            <person name="Morinaga M."/>
            <person name="Sasaki M."/>
            <person name="Togashi T."/>
            <person name="Oyama M."/>
            <person name="Hata H."/>
            <person name="Watanabe M."/>
            <person name="Komatsu T."/>
            <person name="Mizushima-Sugano J."/>
            <person name="Satoh T."/>
            <person name="Shirai Y."/>
            <person name="Takahashi Y."/>
            <person name="Nakagawa K."/>
            <person name="Okumura K."/>
            <person name="Nagase T."/>
            <person name="Nomura N."/>
            <person name="Kikuchi H."/>
            <person name="Masuho Y."/>
            <person name="Yamashita R."/>
            <person name="Nakai K."/>
            <person name="Yada T."/>
            <person name="Nakamura Y."/>
            <person name="Ohara O."/>
            <person name="Isogai T."/>
            <person name="Sugano S."/>
        </authorList>
    </citation>
    <scope>NUCLEOTIDE SEQUENCE [LARGE SCALE MRNA] (ISOFORM 3)</scope>
    <source>
        <tissue>Liver</tissue>
        <tissue>Uterus</tissue>
    </source>
</reference>
<reference key="3">
    <citation type="journal article" date="2005" name="Nature">
        <title>Generation and annotation of the DNA sequences of human chromosomes 2 and 4.</title>
        <authorList>
            <person name="Hillier L.W."/>
            <person name="Graves T.A."/>
            <person name="Fulton R.S."/>
            <person name="Fulton L.A."/>
            <person name="Pepin K.H."/>
            <person name="Minx P."/>
            <person name="Wagner-McPherson C."/>
            <person name="Layman D."/>
            <person name="Wylie K."/>
            <person name="Sekhon M."/>
            <person name="Becker M.C."/>
            <person name="Fewell G.A."/>
            <person name="Delehaunty K.D."/>
            <person name="Miner T.L."/>
            <person name="Nash W.E."/>
            <person name="Kremitzki C."/>
            <person name="Oddy L."/>
            <person name="Du H."/>
            <person name="Sun H."/>
            <person name="Bradshaw-Cordum H."/>
            <person name="Ali J."/>
            <person name="Carter J."/>
            <person name="Cordes M."/>
            <person name="Harris A."/>
            <person name="Isak A."/>
            <person name="van Brunt A."/>
            <person name="Nguyen C."/>
            <person name="Du F."/>
            <person name="Courtney L."/>
            <person name="Kalicki J."/>
            <person name="Ozersky P."/>
            <person name="Abbott S."/>
            <person name="Armstrong J."/>
            <person name="Belter E.A."/>
            <person name="Caruso L."/>
            <person name="Cedroni M."/>
            <person name="Cotton M."/>
            <person name="Davidson T."/>
            <person name="Desai A."/>
            <person name="Elliott G."/>
            <person name="Erb T."/>
            <person name="Fronick C."/>
            <person name="Gaige T."/>
            <person name="Haakenson W."/>
            <person name="Haglund K."/>
            <person name="Holmes A."/>
            <person name="Harkins R."/>
            <person name="Kim K."/>
            <person name="Kruchowski S.S."/>
            <person name="Strong C.M."/>
            <person name="Grewal N."/>
            <person name="Goyea E."/>
            <person name="Hou S."/>
            <person name="Levy A."/>
            <person name="Martinka S."/>
            <person name="Mead K."/>
            <person name="McLellan M.D."/>
            <person name="Meyer R."/>
            <person name="Randall-Maher J."/>
            <person name="Tomlinson C."/>
            <person name="Dauphin-Kohlberg S."/>
            <person name="Kozlowicz-Reilly A."/>
            <person name="Shah N."/>
            <person name="Swearengen-Shahid S."/>
            <person name="Snider J."/>
            <person name="Strong J.T."/>
            <person name="Thompson J."/>
            <person name="Yoakum M."/>
            <person name="Leonard S."/>
            <person name="Pearman C."/>
            <person name="Trani L."/>
            <person name="Radionenko M."/>
            <person name="Waligorski J.E."/>
            <person name="Wang C."/>
            <person name="Rock S.M."/>
            <person name="Tin-Wollam A.-M."/>
            <person name="Maupin R."/>
            <person name="Latreille P."/>
            <person name="Wendl M.C."/>
            <person name="Yang S.-P."/>
            <person name="Pohl C."/>
            <person name="Wallis J.W."/>
            <person name="Spieth J."/>
            <person name="Bieri T.A."/>
            <person name="Berkowicz N."/>
            <person name="Nelson J.O."/>
            <person name="Osborne J."/>
            <person name="Ding L."/>
            <person name="Meyer R."/>
            <person name="Sabo A."/>
            <person name="Shotland Y."/>
            <person name="Sinha P."/>
            <person name="Wohldmann P.E."/>
            <person name="Cook L.L."/>
            <person name="Hickenbotham M.T."/>
            <person name="Eldred J."/>
            <person name="Williams D."/>
            <person name="Jones T.A."/>
            <person name="She X."/>
            <person name="Ciccarelli F.D."/>
            <person name="Izaurralde E."/>
            <person name="Taylor J."/>
            <person name="Schmutz J."/>
            <person name="Myers R.M."/>
            <person name="Cox D.R."/>
            <person name="Huang X."/>
            <person name="McPherson J.D."/>
            <person name="Mardis E.R."/>
            <person name="Clifton S.W."/>
            <person name="Warren W.C."/>
            <person name="Chinwalla A.T."/>
            <person name="Eddy S.R."/>
            <person name="Marra M.A."/>
            <person name="Ovcharenko I."/>
            <person name="Furey T.S."/>
            <person name="Miller W."/>
            <person name="Eichler E.E."/>
            <person name="Bork P."/>
            <person name="Suyama M."/>
            <person name="Torrents D."/>
            <person name="Waterston R.H."/>
            <person name="Wilson R.K."/>
        </authorList>
    </citation>
    <scope>NUCLEOTIDE SEQUENCE [LARGE SCALE GENOMIC DNA]</scope>
</reference>
<reference key="4">
    <citation type="journal article" date="2004" name="Genome Res.">
        <title>The status, quality, and expansion of the NIH full-length cDNA project: the Mammalian Gene Collection (MGC).</title>
        <authorList>
            <consortium name="The MGC Project Team"/>
        </authorList>
    </citation>
    <scope>NUCLEOTIDE SEQUENCE [LARGE SCALE MRNA] (ISOFORMS 2 AND 4)</scope>
    <scope>VARIANT GLU-35</scope>
    <source>
        <tissue>Chondrosarcoma</tissue>
        <tissue>Duodenum</tissue>
    </source>
</reference>
<reference key="5">
    <citation type="journal article" date="2007" name="BMC Genomics">
        <title>The full-ORF clone resource of the German cDNA consortium.</title>
        <authorList>
            <person name="Bechtel S."/>
            <person name="Rosenfelder H."/>
            <person name="Duda A."/>
            <person name="Schmidt C.P."/>
            <person name="Ernst U."/>
            <person name="Wellenreuther R."/>
            <person name="Mehrle A."/>
            <person name="Schuster C."/>
            <person name="Bahr A."/>
            <person name="Bloecker H."/>
            <person name="Heubner D."/>
            <person name="Hoerlein A."/>
            <person name="Michel G."/>
            <person name="Wedler H."/>
            <person name="Koehrer K."/>
            <person name="Ottenwaelder B."/>
            <person name="Poustka A."/>
            <person name="Wiemann S."/>
            <person name="Schupp I."/>
        </authorList>
    </citation>
    <scope>NUCLEOTIDE SEQUENCE [LARGE SCALE MRNA] OF 391-522 (ISOFORM 1)</scope>
    <source>
        <tissue>Lymph node</tissue>
    </source>
</reference>
<reference key="6">
    <citation type="journal article" date="2010" name="Mol. Cell. Biol.">
        <title>DNA polymerase POLN participates in cross-link repair and homologous recombination.</title>
        <authorList>
            <person name="Moldovan G.L."/>
            <person name="Madhavan M.V."/>
            <person name="Mirchandani K.D."/>
            <person name="McCaffrey R.M."/>
            <person name="Vinciguerra P."/>
            <person name="D'Andrea A.D."/>
        </authorList>
    </citation>
    <scope>FUNCTION</scope>
    <scope>INTERACTION WITH POLN</scope>
</reference>
<reference key="7">
    <citation type="journal article" date="2011" name="J. Biol. Chem.">
        <title>Human HEL308 localizes to damaged replication forks and unwinds lagging strand structures.</title>
        <authorList>
            <person name="Tafel A.A."/>
            <person name="Wu L."/>
            <person name="McHugh P.J."/>
        </authorList>
    </citation>
    <scope>FUNCTION</scope>
    <scope>SUBCELLULAR LOCATION</scope>
</reference>
<reference key="8">
    <citation type="journal article" date="2013" name="Nucleic Acids Res.">
        <title>Helq acts in parallel to Fancc to suppress replication-associated genome instability.</title>
        <authorList>
            <person name="Luebben S.W."/>
            <person name="Kawabata T."/>
            <person name="Akre M.K."/>
            <person name="Lee W.L."/>
            <person name="Johnson C.S."/>
            <person name="O'Sullivan M.G."/>
            <person name="Shima N."/>
        </authorList>
    </citation>
    <scope>FUNCTION</scope>
    <scope>INTERACTION WITH RAD51B AND RAD51C</scope>
</reference>
<reference key="9">
    <citation type="journal article" date="2013" name="Nat. Commun.">
        <title>Human DNA helicase HELQ participates in DNA interstrand crosslink tolerance with ATR and RAD51 paralogs.</title>
        <authorList>
            <person name="Takata K."/>
            <person name="Reh S."/>
            <person name="Tomida J."/>
            <person name="Person M.D."/>
            <person name="Wood R.D."/>
        </authorList>
    </citation>
    <scope>FUNCTION</scope>
</reference>
<reference key="10">
    <citation type="journal article" date="2017" name="DNA Repair">
        <title>DNA binding and unwinding by Hel308 helicase requires dual functions of a winged helix domain.</title>
        <authorList>
            <person name="Northall S.J."/>
            <person name="Buckley R."/>
            <person name="Jones N."/>
            <person name="Penedo J.C."/>
            <person name="Soultanas P."/>
            <person name="Bolt E.L."/>
        </authorList>
    </citation>
    <scope>MUTAGENESIS OF 818-TYR-LYS-819</scope>
</reference>
<reference key="11">
    <citation type="journal article" date="2021" name="NAR Cancer">
        <title>The HelQ human DNA repair helicase utilizes a PWI-like domain for DNA loading through interaction with RPA, triggering DNA unwinding by the HelQ helicase core.</title>
        <authorList>
            <person name="Jenkins T."/>
            <person name="Northall S.J."/>
            <person name="Ptchelkine D."/>
            <person name="Lever R."/>
            <person name="Cubbon A."/>
            <person name="Betts H."/>
            <person name="Taresco V."/>
            <person name="Cooper C.D.O."/>
            <person name="McHugh P.J."/>
            <person name="Soultanas P."/>
            <person name="Bolt E.L."/>
        </authorList>
    </citation>
    <scope>FUNCTION</scope>
    <scope>SUBUNIT</scope>
    <scope>CATALYTIC ACTIVITY</scope>
    <scope>INTERACTION WITH THE RPA COMPLEX</scope>
    <scope>MUTAGENESIS OF ASP-463</scope>
</reference>
<reference key="12">
    <citation type="journal article" date="2022" name="Nature">
        <title>HELQ is a dual-function DSB repair enzyme modulated by RPA and RAD51.</title>
        <authorList>
            <person name="Anand R."/>
            <person name="Buechelmaier E."/>
            <person name="Belan O."/>
            <person name="Newton M."/>
            <person name="Vancevska A."/>
            <person name="Kaczmarczyk A."/>
            <person name="Takaki T."/>
            <person name="Rueda D.S."/>
            <person name="Powell S.N."/>
            <person name="Boulton S.J."/>
        </authorList>
    </citation>
    <scope>FUNCTION</scope>
    <scope>CATALYTIC ACTIVITY</scope>
    <scope>SUBCELLULAR LOCATION</scope>
    <scope>INTERACTION WITH RAD51 AND THE RPA COMPLEX</scope>
    <scope>MUTAGENESIS OF LYS-365</scope>
</reference>
<reference key="13">
    <citation type="journal article" date="2006" name="Science">
        <title>The consensus coding sequences of human breast and colorectal cancers.</title>
        <authorList>
            <person name="Sjoeblom T."/>
            <person name="Jones S."/>
            <person name="Wood L.D."/>
            <person name="Parsons D.W."/>
            <person name="Lin J."/>
            <person name="Barber T.D."/>
            <person name="Mandelker D."/>
            <person name="Leary R.J."/>
            <person name="Ptak J."/>
            <person name="Silliman N."/>
            <person name="Szabo S."/>
            <person name="Buckhaults P."/>
            <person name="Farrell C."/>
            <person name="Meeh P."/>
            <person name="Markowitz S.D."/>
            <person name="Willis J."/>
            <person name="Dawson D."/>
            <person name="Willson J.K.V."/>
            <person name="Gazdar A.F."/>
            <person name="Hartigan J."/>
            <person name="Wu L."/>
            <person name="Liu C."/>
            <person name="Parmigiani G."/>
            <person name="Park B.H."/>
            <person name="Bachman K.E."/>
            <person name="Papadopoulos N."/>
            <person name="Vogelstein B."/>
            <person name="Kinzler K.W."/>
            <person name="Velculescu V.E."/>
        </authorList>
    </citation>
    <scope>VARIANT [LARGE SCALE ANALYSIS] ASN-565</scope>
</reference>